<accession>Q9Z8R3</accession>
<accession>Q9JQ44</accession>
<comment type="function">
    <text evidence="1">A type II topoisomerase that negatively supercoils closed circular double-stranded (ds) DNA in an ATP-dependent manner to modulate DNA topology and maintain chromosomes in an underwound state. Negative supercoiling favors strand separation, and DNA replication, transcription, recombination and repair, all of which involve strand separation. Also able to catalyze the interconversion of other topological isomers of dsDNA rings, including catenanes and knotted rings. Type II topoisomerases break and join 2 DNA strands simultaneously in an ATP-dependent manner.</text>
</comment>
<comment type="catalytic activity">
    <reaction evidence="1">
        <text>ATP-dependent breakage, passage and rejoining of double-stranded DNA.</text>
        <dbReference type="EC" id="5.6.2.2"/>
    </reaction>
</comment>
<comment type="cofactor">
    <cofactor evidence="1">
        <name>Mg(2+)</name>
        <dbReference type="ChEBI" id="CHEBI:18420"/>
    </cofactor>
    <cofactor evidence="1">
        <name>Mn(2+)</name>
        <dbReference type="ChEBI" id="CHEBI:29035"/>
    </cofactor>
    <cofactor evidence="1">
        <name>Ca(2+)</name>
        <dbReference type="ChEBI" id="CHEBI:29108"/>
    </cofactor>
    <text evidence="1">Binds two Mg(2+) per subunit. The magnesium ions form salt bridges with both the protein and the DNA. Can also accept other divalent metal cations, such as Mn(2+) or Ca(2+).</text>
</comment>
<comment type="subunit">
    <text evidence="1">Heterotetramer, composed of two GyrA and two GyrB chains. In the heterotetramer, GyrA contains the active site tyrosine that forms a transient covalent intermediate with DNA, while GyrB binds cofactors and catalyzes ATP hydrolysis.</text>
</comment>
<comment type="subcellular location">
    <subcellularLocation>
        <location evidence="1">Cytoplasm</location>
    </subcellularLocation>
</comment>
<comment type="miscellaneous">
    <text evidence="1">Few gyrases are as efficient as E.coli at forming negative supercoils. Not all organisms have 2 type II topoisomerases; in organisms with a single type II topoisomerase this enzyme also has to decatenate newly replicated chromosomes.</text>
</comment>
<comment type="similarity">
    <text evidence="1">Belongs to the type II topoisomerase GyrB family.</text>
</comment>
<keyword id="KW-0067">ATP-binding</keyword>
<keyword id="KW-0963">Cytoplasm</keyword>
<keyword id="KW-0238">DNA-binding</keyword>
<keyword id="KW-0413">Isomerase</keyword>
<keyword id="KW-0460">Magnesium</keyword>
<keyword id="KW-0479">Metal-binding</keyword>
<keyword id="KW-0547">Nucleotide-binding</keyword>
<keyword id="KW-0799">Topoisomerase</keyword>
<sequence>MDPKEKNYDASAITVLEGLQAVRERPGMYIGDTGITGLHHLVYEVVDNSIDEAMAGYCSRIDVRILEDGGIVIVDNGRGIPIEVHERESAKQGREVSALEVVLTVLHAGGKFDKDSYKVSGGLHGVGVSCVNALSEKLVATVFKDKKCYQMEFSRGIPVTPLQYVSVSDRQGTEIVFYPDPKIFSTCTFDRSILMKRLRELAFLNRGITIVFEDDRDVSFDKVTFFYEGGIQSFVSYLNQNKESLFSEPIYICGTRVGDDGEIEFEAALQWNSGYSELVYSYANNIPTRQGGTHLTGFSTALTRVINTYIKAHNLAKNNKLALTGEDIREGLTAVISVKVPNPQFEGQTKQKLGNSDVSSVAQQVVGEALTIFFEENPQIARMIVDKVFVAAQAREAAKKARELTLRKSALDSARLPGKLIDCLEKDPEKCEMYIVEGDSAGGSAKQGRDRRFQAILPIRGKILNVEKARLQKIFQNQEIGTIIAALGCGIGADNFNLSKLRYRRIIIMTDADVDGSHIRTLLLTFFYRHMTALIENECVYIAQPPLYKVSKKKDFRYILSEKEMDSYLLMLGTNESSILFKSTERELRGEALESFINVILDVESFINTLEKKAIPFSEFLEMYKEGIGYPLYYLAPATGMQGGRYLYSDEEKEEALAQEETHKFKIIELYKVAVFVDIQNQLKEYGLDISSYLIPQKNEIVIGNEDSPSCNYSCYTLEEVINYLKNLGRKGIEIQRYKGLGEMNADQLWDTTMNPEQRTLIHVSLKDAVEADHIFTMLMGEEVPPRREFIESHALSIRINNLDI</sequence>
<reference key="1">
    <citation type="journal article" date="1999" name="Nat. Genet.">
        <title>Comparative genomes of Chlamydia pneumoniae and C. trachomatis.</title>
        <authorList>
            <person name="Kalman S."/>
            <person name="Mitchell W.P."/>
            <person name="Marathe R."/>
            <person name="Lammel C.J."/>
            <person name="Fan J."/>
            <person name="Hyman R.W."/>
            <person name="Olinger L."/>
            <person name="Grimwood J."/>
            <person name="Davis R.W."/>
            <person name="Stephens R.S."/>
        </authorList>
    </citation>
    <scope>NUCLEOTIDE SEQUENCE [LARGE SCALE GENOMIC DNA]</scope>
    <source>
        <strain>CWL029</strain>
    </source>
</reference>
<reference key="2">
    <citation type="journal article" date="2000" name="Nucleic Acids Res.">
        <title>Genome sequences of Chlamydia trachomatis MoPn and Chlamydia pneumoniae AR39.</title>
        <authorList>
            <person name="Read T.D."/>
            <person name="Brunham R.C."/>
            <person name="Shen C."/>
            <person name="Gill S.R."/>
            <person name="Heidelberg J.F."/>
            <person name="White O."/>
            <person name="Hickey E.K."/>
            <person name="Peterson J.D."/>
            <person name="Utterback T.R."/>
            <person name="Berry K.J."/>
            <person name="Bass S."/>
            <person name="Linher K.D."/>
            <person name="Weidman J.F."/>
            <person name="Khouri H.M."/>
            <person name="Craven B."/>
            <person name="Bowman C."/>
            <person name="Dodson R.J."/>
            <person name="Gwinn M.L."/>
            <person name="Nelson W.C."/>
            <person name="DeBoy R.T."/>
            <person name="Kolonay J.F."/>
            <person name="McClarty G."/>
            <person name="Salzberg S.L."/>
            <person name="Eisen J.A."/>
            <person name="Fraser C.M."/>
        </authorList>
    </citation>
    <scope>NUCLEOTIDE SEQUENCE [LARGE SCALE GENOMIC DNA]</scope>
    <source>
        <strain>AR39</strain>
    </source>
</reference>
<reference key="3">
    <citation type="journal article" date="2000" name="Nucleic Acids Res.">
        <title>Comparison of whole genome sequences of Chlamydia pneumoniae J138 from Japan and CWL029 from USA.</title>
        <authorList>
            <person name="Shirai M."/>
            <person name="Hirakawa H."/>
            <person name="Kimoto M."/>
            <person name="Tabuchi M."/>
            <person name="Kishi F."/>
            <person name="Ouchi K."/>
            <person name="Shiba T."/>
            <person name="Ishii K."/>
            <person name="Hattori M."/>
            <person name="Kuhara S."/>
            <person name="Nakazawa T."/>
        </authorList>
    </citation>
    <scope>NUCLEOTIDE SEQUENCE [LARGE SCALE GENOMIC DNA]</scope>
    <source>
        <strain>J138</strain>
    </source>
</reference>
<reference key="4">
    <citation type="submission" date="2002-05" db="EMBL/GenBank/DDBJ databases">
        <title>The genome sequence of Chlamydia pneumoniae TW183 and comparison with other Chlamydia strains based on whole genome sequence analysis.</title>
        <authorList>
            <person name="Geng M.M."/>
            <person name="Schuhmacher A."/>
            <person name="Muehldorfer I."/>
            <person name="Bensch K.W."/>
            <person name="Schaefer K.P."/>
            <person name="Schneider S."/>
            <person name="Pohl T."/>
            <person name="Essig A."/>
            <person name="Marre R."/>
            <person name="Melchers K."/>
        </authorList>
    </citation>
    <scope>NUCLEOTIDE SEQUENCE [LARGE SCALE GENOMIC DNA]</scope>
    <source>
        <strain>TW-183</strain>
    </source>
</reference>
<gene>
    <name evidence="1" type="primary">gyrB</name>
    <name type="ordered locus">CPn_0275</name>
    <name type="ordered locus">CP_0484</name>
    <name type="ordered locus">CpB0282</name>
</gene>
<protein>
    <recommendedName>
        <fullName evidence="1">DNA gyrase subunit B</fullName>
        <ecNumber evidence="1">5.6.2.2</ecNumber>
    </recommendedName>
</protein>
<name>GYRB_CHLPN</name>
<evidence type="ECO:0000255" key="1">
    <source>
        <dbReference type="HAMAP-Rule" id="MF_01898"/>
    </source>
</evidence>
<proteinExistence type="inferred from homology"/>
<organism>
    <name type="scientific">Chlamydia pneumoniae</name>
    <name type="common">Chlamydophila pneumoniae</name>
    <dbReference type="NCBI Taxonomy" id="83558"/>
    <lineage>
        <taxon>Bacteria</taxon>
        <taxon>Pseudomonadati</taxon>
        <taxon>Chlamydiota</taxon>
        <taxon>Chlamydiia</taxon>
        <taxon>Chlamydiales</taxon>
        <taxon>Chlamydiaceae</taxon>
        <taxon>Chlamydia/Chlamydophila group</taxon>
        <taxon>Chlamydia</taxon>
    </lineage>
</organism>
<feature type="chain" id="PRO_0000145304" description="DNA gyrase subunit B">
    <location>
        <begin position="1"/>
        <end position="805"/>
    </location>
</feature>
<feature type="domain" description="Toprim" evidence="1">
    <location>
        <begin position="431"/>
        <end position="546"/>
    </location>
</feature>
<feature type="binding site" evidence="1">
    <location>
        <position position="437"/>
    </location>
    <ligand>
        <name>Mg(2+)</name>
        <dbReference type="ChEBI" id="CHEBI:18420"/>
        <label>1</label>
        <note>catalytic</note>
    </ligand>
</feature>
<feature type="binding site" evidence="1">
    <location>
        <position position="511"/>
    </location>
    <ligand>
        <name>Mg(2+)</name>
        <dbReference type="ChEBI" id="CHEBI:18420"/>
        <label>1</label>
        <note>catalytic</note>
    </ligand>
</feature>
<feature type="binding site" evidence="1">
    <location>
        <position position="511"/>
    </location>
    <ligand>
        <name>Mg(2+)</name>
        <dbReference type="ChEBI" id="CHEBI:18420"/>
        <label>2</label>
    </ligand>
</feature>
<feature type="binding site" evidence="1">
    <location>
        <position position="513"/>
    </location>
    <ligand>
        <name>Mg(2+)</name>
        <dbReference type="ChEBI" id="CHEBI:18420"/>
        <label>2</label>
    </ligand>
</feature>
<feature type="site" description="Interaction with DNA" evidence="1">
    <location>
        <position position="462"/>
    </location>
</feature>
<feature type="site" description="Interaction with DNA" evidence="1">
    <location>
        <position position="465"/>
    </location>
</feature>
<dbReference type="EC" id="5.6.2.2" evidence="1"/>
<dbReference type="EMBL" id="AE001363">
    <property type="protein sequence ID" value="AAD18424.1"/>
    <property type="molecule type" value="Genomic_DNA"/>
</dbReference>
<dbReference type="EMBL" id="AE002161">
    <property type="protein sequence ID" value="AAF38314.1"/>
    <property type="molecule type" value="Genomic_DNA"/>
</dbReference>
<dbReference type="EMBL" id="BA000008">
    <property type="protein sequence ID" value="BAA98485.1"/>
    <property type="molecule type" value="Genomic_DNA"/>
</dbReference>
<dbReference type="EMBL" id="AE009440">
    <property type="protein sequence ID" value="AAP98215.1"/>
    <property type="molecule type" value="Genomic_DNA"/>
</dbReference>
<dbReference type="PIR" id="C86525">
    <property type="entry name" value="C86525"/>
</dbReference>
<dbReference type="PIR" id="H72098">
    <property type="entry name" value="H72098"/>
</dbReference>
<dbReference type="RefSeq" id="NP_224480.1">
    <property type="nucleotide sequence ID" value="NC_000922.1"/>
</dbReference>
<dbReference type="RefSeq" id="WP_010882923.1">
    <property type="nucleotide sequence ID" value="NZ_LN847257.1"/>
</dbReference>
<dbReference type="SMR" id="Q9Z8R3"/>
<dbReference type="STRING" id="406984.CPK_ORF00783"/>
<dbReference type="GeneID" id="45050324"/>
<dbReference type="KEGG" id="cpa:CP_0484"/>
<dbReference type="KEGG" id="cpj:gyrB_1"/>
<dbReference type="KEGG" id="cpn:CPn_0275"/>
<dbReference type="KEGG" id="cpt:CpB0282"/>
<dbReference type="PATRIC" id="fig|115713.3.peg.308"/>
<dbReference type="eggNOG" id="COG0187">
    <property type="taxonomic scope" value="Bacteria"/>
</dbReference>
<dbReference type="HOGENOM" id="CLU_006146_0_1_0"/>
<dbReference type="OrthoDB" id="9802808at2"/>
<dbReference type="Proteomes" id="UP000000583">
    <property type="component" value="Chromosome"/>
</dbReference>
<dbReference type="Proteomes" id="UP000000801">
    <property type="component" value="Chromosome"/>
</dbReference>
<dbReference type="GO" id="GO:0005694">
    <property type="term" value="C:chromosome"/>
    <property type="evidence" value="ECO:0007669"/>
    <property type="project" value="InterPro"/>
</dbReference>
<dbReference type="GO" id="GO:0005737">
    <property type="term" value="C:cytoplasm"/>
    <property type="evidence" value="ECO:0007669"/>
    <property type="project" value="UniProtKB-SubCell"/>
</dbReference>
<dbReference type="GO" id="GO:0005524">
    <property type="term" value="F:ATP binding"/>
    <property type="evidence" value="ECO:0007669"/>
    <property type="project" value="UniProtKB-UniRule"/>
</dbReference>
<dbReference type="GO" id="GO:0003677">
    <property type="term" value="F:DNA binding"/>
    <property type="evidence" value="ECO:0007669"/>
    <property type="project" value="UniProtKB-KW"/>
</dbReference>
<dbReference type="GO" id="GO:0003918">
    <property type="term" value="F:DNA topoisomerase type II (double strand cut, ATP-hydrolyzing) activity"/>
    <property type="evidence" value="ECO:0007669"/>
    <property type="project" value="UniProtKB-UniRule"/>
</dbReference>
<dbReference type="GO" id="GO:0046872">
    <property type="term" value="F:metal ion binding"/>
    <property type="evidence" value="ECO:0007669"/>
    <property type="project" value="UniProtKB-KW"/>
</dbReference>
<dbReference type="GO" id="GO:0006265">
    <property type="term" value="P:DNA topological change"/>
    <property type="evidence" value="ECO:0007669"/>
    <property type="project" value="UniProtKB-UniRule"/>
</dbReference>
<dbReference type="GO" id="GO:0006261">
    <property type="term" value="P:DNA-templated DNA replication"/>
    <property type="evidence" value="ECO:0007669"/>
    <property type="project" value="UniProtKB-UniRule"/>
</dbReference>
<dbReference type="CDD" id="cd16928">
    <property type="entry name" value="HATPase_GyrB-like"/>
    <property type="match status" value="1"/>
</dbReference>
<dbReference type="CDD" id="cd00822">
    <property type="entry name" value="TopoII_Trans_DNA_gyrase"/>
    <property type="match status" value="1"/>
</dbReference>
<dbReference type="CDD" id="cd03366">
    <property type="entry name" value="TOPRIM_TopoIIA_GyrB"/>
    <property type="match status" value="1"/>
</dbReference>
<dbReference type="FunFam" id="3.30.230.10:FF:000005">
    <property type="entry name" value="DNA gyrase subunit B"/>
    <property type="match status" value="1"/>
</dbReference>
<dbReference type="FunFam" id="3.30.565.10:FF:000002">
    <property type="entry name" value="DNA gyrase subunit B"/>
    <property type="match status" value="1"/>
</dbReference>
<dbReference type="FunFam" id="3.40.50.670:FF:000007">
    <property type="entry name" value="DNA gyrase subunit B"/>
    <property type="match status" value="1"/>
</dbReference>
<dbReference type="Gene3D" id="3.30.230.10">
    <property type="match status" value="1"/>
</dbReference>
<dbReference type="Gene3D" id="3.40.50.670">
    <property type="match status" value="2"/>
</dbReference>
<dbReference type="Gene3D" id="3.30.565.10">
    <property type="entry name" value="Histidine kinase-like ATPase, C-terminal domain"/>
    <property type="match status" value="1"/>
</dbReference>
<dbReference type="HAMAP" id="MF_01898">
    <property type="entry name" value="GyrB"/>
    <property type="match status" value="1"/>
</dbReference>
<dbReference type="InterPro" id="IPR002288">
    <property type="entry name" value="DNA_gyrase_B_C"/>
</dbReference>
<dbReference type="InterPro" id="IPR011557">
    <property type="entry name" value="GyrB"/>
</dbReference>
<dbReference type="InterPro" id="IPR036890">
    <property type="entry name" value="HATPase_C_sf"/>
</dbReference>
<dbReference type="InterPro" id="IPR020568">
    <property type="entry name" value="Ribosomal_Su5_D2-typ_SF"/>
</dbReference>
<dbReference type="InterPro" id="IPR014721">
    <property type="entry name" value="Ribsml_uS5_D2-typ_fold_subgr"/>
</dbReference>
<dbReference type="InterPro" id="IPR001241">
    <property type="entry name" value="Topo_IIA"/>
</dbReference>
<dbReference type="InterPro" id="IPR013760">
    <property type="entry name" value="Topo_IIA-like_dom_sf"/>
</dbReference>
<dbReference type="InterPro" id="IPR000565">
    <property type="entry name" value="Topo_IIA_B"/>
</dbReference>
<dbReference type="InterPro" id="IPR013759">
    <property type="entry name" value="Topo_IIA_B_C"/>
</dbReference>
<dbReference type="InterPro" id="IPR013506">
    <property type="entry name" value="Topo_IIA_bsu_dom2"/>
</dbReference>
<dbReference type="InterPro" id="IPR018522">
    <property type="entry name" value="TopoIIA_CS"/>
</dbReference>
<dbReference type="InterPro" id="IPR006171">
    <property type="entry name" value="TOPRIM_dom"/>
</dbReference>
<dbReference type="InterPro" id="IPR034160">
    <property type="entry name" value="TOPRIM_GyrB"/>
</dbReference>
<dbReference type="NCBIfam" id="TIGR01059">
    <property type="entry name" value="gyrB"/>
    <property type="match status" value="1"/>
</dbReference>
<dbReference type="NCBIfam" id="NF004189">
    <property type="entry name" value="PRK05644.1"/>
    <property type="match status" value="1"/>
</dbReference>
<dbReference type="NCBIfam" id="NF011501">
    <property type="entry name" value="PRK14939.1"/>
    <property type="match status" value="1"/>
</dbReference>
<dbReference type="PANTHER" id="PTHR45866:SF1">
    <property type="entry name" value="DNA GYRASE SUBUNIT B, MITOCHONDRIAL"/>
    <property type="match status" value="1"/>
</dbReference>
<dbReference type="PANTHER" id="PTHR45866">
    <property type="entry name" value="DNA GYRASE/TOPOISOMERASE SUBUNIT B"/>
    <property type="match status" value="1"/>
</dbReference>
<dbReference type="Pfam" id="PF00204">
    <property type="entry name" value="DNA_gyraseB"/>
    <property type="match status" value="1"/>
</dbReference>
<dbReference type="Pfam" id="PF00986">
    <property type="entry name" value="DNA_gyraseB_C"/>
    <property type="match status" value="1"/>
</dbReference>
<dbReference type="Pfam" id="PF02518">
    <property type="entry name" value="HATPase_c"/>
    <property type="match status" value="1"/>
</dbReference>
<dbReference type="Pfam" id="PF01751">
    <property type="entry name" value="Toprim"/>
    <property type="match status" value="1"/>
</dbReference>
<dbReference type="PRINTS" id="PR01159">
    <property type="entry name" value="DNAGYRASEB"/>
</dbReference>
<dbReference type="PRINTS" id="PR00418">
    <property type="entry name" value="TPI2FAMILY"/>
</dbReference>
<dbReference type="SMART" id="SM00387">
    <property type="entry name" value="HATPase_c"/>
    <property type="match status" value="1"/>
</dbReference>
<dbReference type="SMART" id="SM00433">
    <property type="entry name" value="TOP2c"/>
    <property type="match status" value="1"/>
</dbReference>
<dbReference type="SUPFAM" id="SSF55874">
    <property type="entry name" value="ATPase domain of HSP90 chaperone/DNA topoisomerase II/histidine kinase"/>
    <property type="match status" value="1"/>
</dbReference>
<dbReference type="SUPFAM" id="SSF54211">
    <property type="entry name" value="Ribosomal protein S5 domain 2-like"/>
    <property type="match status" value="1"/>
</dbReference>
<dbReference type="SUPFAM" id="SSF56719">
    <property type="entry name" value="Type II DNA topoisomerase"/>
    <property type="match status" value="1"/>
</dbReference>
<dbReference type="PROSITE" id="PS00177">
    <property type="entry name" value="TOPOISOMERASE_II"/>
    <property type="match status" value="1"/>
</dbReference>
<dbReference type="PROSITE" id="PS50880">
    <property type="entry name" value="TOPRIM"/>
    <property type="match status" value="1"/>
</dbReference>